<feature type="chain" id="PRO_0000154836" description="Probable tRNA sulfurtransferase">
    <location>
        <begin position="1"/>
        <end position="392"/>
    </location>
</feature>
<feature type="domain" description="THUMP" evidence="1">
    <location>
        <begin position="59"/>
        <end position="166"/>
    </location>
</feature>
<feature type="binding site" evidence="1">
    <location>
        <begin position="186"/>
        <end position="187"/>
    </location>
    <ligand>
        <name>ATP</name>
        <dbReference type="ChEBI" id="CHEBI:30616"/>
    </ligand>
</feature>
<feature type="binding site" evidence="1">
    <location>
        <begin position="211"/>
        <end position="212"/>
    </location>
    <ligand>
        <name>ATP</name>
        <dbReference type="ChEBI" id="CHEBI:30616"/>
    </ligand>
</feature>
<feature type="binding site" evidence="1">
    <location>
        <position position="269"/>
    </location>
    <ligand>
        <name>ATP</name>
        <dbReference type="ChEBI" id="CHEBI:30616"/>
    </ligand>
</feature>
<feature type="binding site" evidence="1">
    <location>
        <position position="290"/>
    </location>
    <ligand>
        <name>ATP</name>
        <dbReference type="ChEBI" id="CHEBI:30616"/>
    </ligand>
</feature>
<feature type="binding site" evidence="1">
    <location>
        <position position="299"/>
    </location>
    <ligand>
        <name>ATP</name>
        <dbReference type="ChEBI" id="CHEBI:30616"/>
    </ligand>
</feature>
<name>THII_COXBU</name>
<reference key="1">
    <citation type="journal article" date="2003" name="Proc. Natl. Acad. Sci. U.S.A.">
        <title>Complete genome sequence of the Q-fever pathogen, Coxiella burnetii.</title>
        <authorList>
            <person name="Seshadri R."/>
            <person name="Paulsen I.T."/>
            <person name="Eisen J.A."/>
            <person name="Read T.D."/>
            <person name="Nelson K.E."/>
            <person name="Nelson W.C."/>
            <person name="Ward N.L."/>
            <person name="Tettelin H."/>
            <person name="Davidsen T.M."/>
            <person name="Beanan M.J."/>
            <person name="DeBoy R.T."/>
            <person name="Daugherty S.C."/>
            <person name="Brinkac L.M."/>
            <person name="Madupu R."/>
            <person name="Dodson R.J."/>
            <person name="Khouri H.M."/>
            <person name="Lee K.H."/>
            <person name="Carty H.A."/>
            <person name="Scanlan D."/>
            <person name="Heinzen R.A."/>
            <person name="Thompson H.A."/>
            <person name="Samuel J.E."/>
            <person name="Fraser C.M."/>
            <person name="Heidelberg J.F."/>
        </authorList>
    </citation>
    <scope>NUCLEOTIDE SEQUENCE [LARGE SCALE GENOMIC DNA]</scope>
    <source>
        <strain>RSA 493 / Nine Mile phase I</strain>
    </source>
</reference>
<comment type="function">
    <text evidence="1">Catalyzes the ATP-dependent transfer of a sulfur to tRNA to produce 4-thiouridine in position 8 of tRNAs, which functions as a near-UV photosensor. Also catalyzes the transfer of sulfur to the sulfur carrier protein ThiS, forming ThiS-thiocarboxylate. This is a step in the synthesis of thiazole, in the thiamine biosynthesis pathway. The sulfur is donated as persulfide by IscS.</text>
</comment>
<comment type="catalytic activity">
    <reaction evidence="1">
        <text>[ThiI sulfur-carrier protein]-S-sulfanyl-L-cysteine + a uridine in tRNA + 2 reduced [2Fe-2S]-[ferredoxin] + ATP + H(+) = [ThiI sulfur-carrier protein]-L-cysteine + a 4-thiouridine in tRNA + 2 oxidized [2Fe-2S]-[ferredoxin] + AMP + diphosphate</text>
        <dbReference type="Rhea" id="RHEA:24176"/>
        <dbReference type="Rhea" id="RHEA-COMP:10000"/>
        <dbReference type="Rhea" id="RHEA-COMP:10001"/>
        <dbReference type="Rhea" id="RHEA-COMP:13337"/>
        <dbReference type="Rhea" id="RHEA-COMP:13338"/>
        <dbReference type="Rhea" id="RHEA-COMP:13339"/>
        <dbReference type="Rhea" id="RHEA-COMP:13340"/>
        <dbReference type="ChEBI" id="CHEBI:15378"/>
        <dbReference type="ChEBI" id="CHEBI:29950"/>
        <dbReference type="ChEBI" id="CHEBI:30616"/>
        <dbReference type="ChEBI" id="CHEBI:33019"/>
        <dbReference type="ChEBI" id="CHEBI:33737"/>
        <dbReference type="ChEBI" id="CHEBI:33738"/>
        <dbReference type="ChEBI" id="CHEBI:61963"/>
        <dbReference type="ChEBI" id="CHEBI:65315"/>
        <dbReference type="ChEBI" id="CHEBI:136798"/>
        <dbReference type="ChEBI" id="CHEBI:456215"/>
        <dbReference type="EC" id="2.8.1.4"/>
    </reaction>
</comment>
<comment type="catalytic activity">
    <reaction evidence="1">
        <text>[ThiS sulfur-carrier protein]-C-terminal Gly-Gly-AMP + S-sulfanyl-L-cysteinyl-[cysteine desulfurase] + AH2 = [ThiS sulfur-carrier protein]-C-terminal-Gly-aminoethanethioate + L-cysteinyl-[cysteine desulfurase] + A + AMP + 2 H(+)</text>
        <dbReference type="Rhea" id="RHEA:43340"/>
        <dbReference type="Rhea" id="RHEA-COMP:12157"/>
        <dbReference type="Rhea" id="RHEA-COMP:12158"/>
        <dbReference type="Rhea" id="RHEA-COMP:12910"/>
        <dbReference type="Rhea" id="RHEA-COMP:19908"/>
        <dbReference type="ChEBI" id="CHEBI:13193"/>
        <dbReference type="ChEBI" id="CHEBI:15378"/>
        <dbReference type="ChEBI" id="CHEBI:17499"/>
        <dbReference type="ChEBI" id="CHEBI:29950"/>
        <dbReference type="ChEBI" id="CHEBI:61963"/>
        <dbReference type="ChEBI" id="CHEBI:90618"/>
        <dbReference type="ChEBI" id="CHEBI:232372"/>
        <dbReference type="ChEBI" id="CHEBI:456215"/>
    </reaction>
</comment>
<comment type="pathway">
    <text evidence="1">Cofactor biosynthesis; thiamine diphosphate biosynthesis.</text>
</comment>
<comment type="subcellular location">
    <subcellularLocation>
        <location evidence="1">Cytoplasm</location>
    </subcellularLocation>
</comment>
<comment type="similarity">
    <text evidence="1">Belongs to the ThiI family.</text>
</comment>
<sequence length="392" mass="44677">MKKVILIKYGEIALKGKNRHLFESSIIENIRLAIGEGAPPIEQCRGRLYLQLTTEKDISCYREALKRVFGVVGFALAYRLNLEINLEEMEEVLIKHLRKLESKSLAFRVDTRRTVKSFPMDSMEINKKLGALILQHFPKWQVNLNNPELTIFIEVRDEGLFIYTTEDHEDGLGGLPVGVGGRGLLLLSGGIDSPVAGWTLLKRGMMIDAVYFHSFPYTGEKAKEKVIDLARVLTSWKLRAINLHIPYFTKIQETVNKMCPESTWTIIHRRFMMRIAEKLTKSTYHTLITGENLGQVASQTIQNIAVINQATNLPILRPLISFDKNDIIKIAEKIGTFRISKRPYEDCCALFAPKNPETKAKEEAILKAEENLPLNELINEALEKMETLRIKN</sequence>
<protein>
    <recommendedName>
        <fullName evidence="1">Probable tRNA sulfurtransferase</fullName>
        <ecNumber evidence="1">2.8.1.4</ecNumber>
    </recommendedName>
    <alternativeName>
        <fullName evidence="1">Sulfur carrier protein ThiS sulfurtransferase</fullName>
    </alternativeName>
    <alternativeName>
        <fullName evidence="1">Thiamine biosynthesis protein ThiI</fullName>
    </alternativeName>
    <alternativeName>
        <fullName evidence="1">tRNA 4-thiouridine synthase</fullName>
    </alternativeName>
</protein>
<keyword id="KW-0067">ATP-binding</keyword>
<keyword id="KW-0963">Cytoplasm</keyword>
<keyword id="KW-0547">Nucleotide-binding</keyword>
<keyword id="KW-1185">Reference proteome</keyword>
<keyword id="KW-0694">RNA-binding</keyword>
<keyword id="KW-0784">Thiamine biosynthesis</keyword>
<keyword id="KW-0808">Transferase</keyword>
<keyword id="KW-0820">tRNA-binding</keyword>
<organism>
    <name type="scientific">Coxiella burnetii (strain RSA 493 / Nine Mile phase I)</name>
    <dbReference type="NCBI Taxonomy" id="227377"/>
    <lineage>
        <taxon>Bacteria</taxon>
        <taxon>Pseudomonadati</taxon>
        <taxon>Pseudomonadota</taxon>
        <taxon>Gammaproteobacteria</taxon>
        <taxon>Legionellales</taxon>
        <taxon>Coxiellaceae</taxon>
        <taxon>Coxiella</taxon>
    </lineage>
</organism>
<gene>
    <name evidence="1" type="primary">thiI</name>
    <name type="ordered locus">CBU_1181</name>
</gene>
<evidence type="ECO:0000255" key="1">
    <source>
        <dbReference type="HAMAP-Rule" id="MF_00021"/>
    </source>
</evidence>
<proteinExistence type="inferred from homology"/>
<accession>Q83CD9</accession>
<dbReference type="EC" id="2.8.1.4" evidence="1"/>
<dbReference type="EMBL" id="AE016828">
    <property type="protein sequence ID" value="AAO90690.1"/>
    <property type="molecule type" value="Genomic_DNA"/>
</dbReference>
<dbReference type="RefSeq" id="NP_820176.1">
    <property type="nucleotide sequence ID" value="NC_002971.4"/>
</dbReference>
<dbReference type="RefSeq" id="WP_010958056.1">
    <property type="nucleotide sequence ID" value="NC_002971.4"/>
</dbReference>
<dbReference type="SMR" id="Q83CD9"/>
<dbReference type="STRING" id="227377.CBU_1181"/>
<dbReference type="DNASU" id="1209084"/>
<dbReference type="EnsemblBacteria" id="AAO90690">
    <property type="protein sequence ID" value="AAO90690"/>
    <property type="gene ID" value="CBU_1181"/>
</dbReference>
<dbReference type="GeneID" id="1209084"/>
<dbReference type="KEGG" id="cbu:CBU_1181"/>
<dbReference type="PATRIC" id="fig|227377.7.peg.1178"/>
<dbReference type="eggNOG" id="COG0301">
    <property type="taxonomic scope" value="Bacteria"/>
</dbReference>
<dbReference type="HOGENOM" id="CLU_037952_4_0_6"/>
<dbReference type="OrthoDB" id="9773948at2"/>
<dbReference type="UniPathway" id="UPA00060"/>
<dbReference type="Proteomes" id="UP000002671">
    <property type="component" value="Chromosome"/>
</dbReference>
<dbReference type="GO" id="GO:0005829">
    <property type="term" value="C:cytosol"/>
    <property type="evidence" value="ECO:0000318"/>
    <property type="project" value="GO_Central"/>
</dbReference>
<dbReference type="GO" id="GO:0005524">
    <property type="term" value="F:ATP binding"/>
    <property type="evidence" value="ECO:0007669"/>
    <property type="project" value="UniProtKB-UniRule"/>
</dbReference>
<dbReference type="GO" id="GO:0004810">
    <property type="term" value="F:CCA tRNA nucleotidyltransferase activity"/>
    <property type="evidence" value="ECO:0007669"/>
    <property type="project" value="InterPro"/>
</dbReference>
<dbReference type="GO" id="GO:0000049">
    <property type="term" value="F:tRNA binding"/>
    <property type="evidence" value="ECO:0007669"/>
    <property type="project" value="UniProtKB-UniRule"/>
</dbReference>
<dbReference type="GO" id="GO:0140741">
    <property type="term" value="F:tRNA-uracil-4 sulfurtransferase activity"/>
    <property type="evidence" value="ECO:0007669"/>
    <property type="project" value="UniProtKB-EC"/>
</dbReference>
<dbReference type="GO" id="GO:0009228">
    <property type="term" value="P:thiamine biosynthetic process"/>
    <property type="evidence" value="ECO:0007669"/>
    <property type="project" value="UniProtKB-KW"/>
</dbReference>
<dbReference type="GO" id="GO:0009229">
    <property type="term" value="P:thiamine diphosphate biosynthetic process"/>
    <property type="evidence" value="ECO:0007669"/>
    <property type="project" value="UniProtKB-UniRule"/>
</dbReference>
<dbReference type="GO" id="GO:0052837">
    <property type="term" value="P:thiazole biosynthetic process"/>
    <property type="evidence" value="ECO:0000318"/>
    <property type="project" value="GO_Central"/>
</dbReference>
<dbReference type="GO" id="GO:0002937">
    <property type="term" value="P:tRNA 4-thiouridine biosynthesis"/>
    <property type="evidence" value="ECO:0000318"/>
    <property type="project" value="GO_Central"/>
</dbReference>
<dbReference type="CDD" id="cd01712">
    <property type="entry name" value="PPase_ThiI"/>
    <property type="match status" value="1"/>
</dbReference>
<dbReference type="CDD" id="cd11716">
    <property type="entry name" value="THUMP_ThiI"/>
    <property type="match status" value="1"/>
</dbReference>
<dbReference type="FunFam" id="3.40.50.620:FF:000053">
    <property type="entry name" value="Probable tRNA sulfurtransferase"/>
    <property type="match status" value="1"/>
</dbReference>
<dbReference type="Gene3D" id="3.30.2130.30">
    <property type="match status" value="1"/>
</dbReference>
<dbReference type="Gene3D" id="3.40.50.620">
    <property type="entry name" value="HUPs"/>
    <property type="match status" value="1"/>
</dbReference>
<dbReference type="HAMAP" id="MF_00021">
    <property type="entry name" value="ThiI"/>
    <property type="match status" value="1"/>
</dbReference>
<dbReference type="InterPro" id="IPR014729">
    <property type="entry name" value="Rossmann-like_a/b/a_fold"/>
</dbReference>
<dbReference type="InterPro" id="IPR020536">
    <property type="entry name" value="ThiI_AANH"/>
</dbReference>
<dbReference type="InterPro" id="IPR054173">
    <property type="entry name" value="ThiI_fer"/>
</dbReference>
<dbReference type="InterPro" id="IPR049961">
    <property type="entry name" value="ThiI_N"/>
</dbReference>
<dbReference type="InterPro" id="IPR004114">
    <property type="entry name" value="THUMP_dom"/>
</dbReference>
<dbReference type="InterPro" id="IPR049962">
    <property type="entry name" value="THUMP_ThiI"/>
</dbReference>
<dbReference type="InterPro" id="IPR003720">
    <property type="entry name" value="tRNA_STrfase"/>
</dbReference>
<dbReference type="InterPro" id="IPR050102">
    <property type="entry name" value="tRNA_sulfurtransferase_ThiI"/>
</dbReference>
<dbReference type="NCBIfam" id="TIGR00342">
    <property type="entry name" value="tRNA uracil 4-sulfurtransferase ThiI"/>
    <property type="match status" value="1"/>
</dbReference>
<dbReference type="PANTHER" id="PTHR43209">
    <property type="entry name" value="TRNA SULFURTRANSFERASE"/>
    <property type="match status" value="1"/>
</dbReference>
<dbReference type="PANTHER" id="PTHR43209:SF1">
    <property type="entry name" value="TRNA SULFURTRANSFERASE"/>
    <property type="match status" value="1"/>
</dbReference>
<dbReference type="Pfam" id="PF02568">
    <property type="entry name" value="ThiI"/>
    <property type="match status" value="1"/>
</dbReference>
<dbReference type="Pfam" id="PF22025">
    <property type="entry name" value="ThiI_fer"/>
    <property type="match status" value="1"/>
</dbReference>
<dbReference type="Pfam" id="PF02926">
    <property type="entry name" value="THUMP"/>
    <property type="match status" value="1"/>
</dbReference>
<dbReference type="SMART" id="SM00981">
    <property type="entry name" value="THUMP"/>
    <property type="match status" value="1"/>
</dbReference>
<dbReference type="SUPFAM" id="SSF52402">
    <property type="entry name" value="Adenine nucleotide alpha hydrolases-like"/>
    <property type="match status" value="1"/>
</dbReference>
<dbReference type="SUPFAM" id="SSF143437">
    <property type="entry name" value="THUMP domain-like"/>
    <property type="match status" value="1"/>
</dbReference>
<dbReference type="PROSITE" id="PS51165">
    <property type="entry name" value="THUMP"/>
    <property type="match status" value="1"/>
</dbReference>